<accession>Q6IV56</accession>
<accession>Q6IQ76</accession>
<protein>
    <recommendedName>
        <fullName>RING finger protein 141</fullName>
    </recommendedName>
</protein>
<gene>
    <name type="primary">rnf141</name>
    <name type="ORF">zgc:86917</name>
</gene>
<name>RN141_DANRE</name>
<evidence type="ECO:0000255" key="1">
    <source>
        <dbReference type="PROSITE-ProRule" id="PRU00175"/>
    </source>
</evidence>
<evidence type="ECO:0000305" key="2"/>
<proteinExistence type="evidence at transcript level"/>
<feature type="chain" id="PRO_0000056106" description="RING finger protein 141">
    <location>
        <begin position="1"/>
        <end position="222"/>
    </location>
</feature>
<feature type="zinc finger region" description="RING-type" evidence="1">
    <location>
        <begin position="147"/>
        <end position="184"/>
    </location>
</feature>
<feature type="sequence conflict" description="In Ref. 2; AAH71534." evidence="2" ref="2">
    <original>F</original>
    <variation>L</variation>
    <location>
        <position position="115"/>
    </location>
</feature>
<feature type="sequence conflict" description="In Ref. 2; AAH71534." evidence="2" ref="2">
    <original>W</original>
    <variation>R</variation>
    <location>
        <position position="134"/>
    </location>
</feature>
<feature type="sequence conflict" description="In Ref. 2; AAH71534." evidence="2" ref="2">
    <original>G</original>
    <variation>E</variation>
    <location>
        <position position="202"/>
    </location>
</feature>
<reference key="1">
    <citation type="submission" date="2005-01" db="EMBL/GenBank/DDBJ databases">
        <title>Molecular cloning of zebrafish Rnf141 gene.</title>
        <authorList>
            <person name="Ma Y."/>
            <person name="Zhang S."/>
            <person name="Dong J."/>
            <person name="Liu Y."/>
            <person name="Qiu W."/>
            <person name="Sun Y."/>
            <person name="Peng Y."/>
        </authorList>
    </citation>
    <scope>NUCLEOTIDE SEQUENCE [MRNA]</scope>
    <source>
        <tissue>Testis</tissue>
    </source>
</reference>
<reference key="2">
    <citation type="submission" date="2004-06" db="EMBL/GenBank/DDBJ databases">
        <authorList>
            <consortium name="NIH - Zebrafish Gene Collection (ZGC) project"/>
        </authorList>
    </citation>
    <scope>NUCLEOTIDE SEQUENCE [LARGE SCALE MRNA]</scope>
    <source>
        <tissue>Embryo</tissue>
    </source>
</reference>
<organism>
    <name type="scientific">Danio rerio</name>
    <name type="common">Zebrafish</name>
    <name type="synonym">Brachydanio rerio</name>
    <dbReference type="NCBI Taxonomy" id="7955"/>
    <lineage>
        <taxon>Eukaryota</taxon>
        <taxon>Metazoa</taxon>
        <taxon>Chordata</taxon>
        <taxon>Craniata</taxon>
        <taxon>Vertebrata</taxon>
        <taxon>Euteleostomi</taxon>
        <taxon>Actinopterygii</taxon>
        <taxon>Neopterygii</taxon>
        <taxon>Teleostei</taxon>
        <taxon>Ostariophysi</taxon>
        <taxon>Cypriniformes</taxon>
        <taxon>Danionidae</taxon>
        <taxon>Danioninae</taxon>
        <taxon>Danio</taxon>
    </lineage>
</organism>
<dbReference type="EMBL" id="AY621088">
    <property type="protein sequence ID" value="AAT45393.2"/>
    <property type="molecule type" value="mRNA"/>
</dbReference>
<dbReference type="EMBL" id="BC071534">
    <property type="protein sequence ID" value="AAH71534.1"/>
    <property type="molecule type" value="mRNA"/>
</dbReference>
<dbReference type="FunCoup" id="Q6IV56">
    <property type="interactions" value="1008"/>
</dbReference>
<dbReference type="STRING" id="7955.ENSDARP00000061264"/>
<dbReference type="PaxDb" id="7955-ENSDARP00000108092"/>
<dbReference type="AGR" id="ZFIN:ZDB-GENE-040625-71"/>
<dbReference type="ZFIN" id="ZDB-GENE-040625-71">
    <property type="gene designation" value="rnf141"/>
</dbReference>
<dbReference type="eggNOG" id="KOG1039">
    <property type="taxonomic scope" value="Eukaryota"/>
</dbReference>
<dbReference type="InParanoid" id="Q6IV56"/>
<dbReference type="PhylomeDB" id="Q6IV56"/>
<dbReference type="PRO" id="PR:Q6IV56"/>
<dbReference type="Proteomes" id="UP000000437">
    <property type="component" value="Unplaced"/>
</dbReference>
<dbReference type="GO" id="GO:0004842">
    <property type="term" value="F:ubiquitin-protein transferase activity"/>
    <property type="evidence" value="ECO:0000318"/>
    <property type="project" value="GO_Central"/>
</dbReference>
<dbReference type="GO" id="GO:0008270">
    <property type="term" value="F:zinc ion binding"/>
    <property type="evidence" value="ECO:0007669"/>
    <property type="project" value="UniProtKB-KW"/>
</dbReference>
<dbReference type="GO" id="GO:0051865">
    <property type="term" value="P:protein autoubiquitination"/>
    <property type="evidence" value="ECO:0000318"/>
    <property type="project" value="GO_Central"/>
</dbReference>
<dbReference type="CDD" id="cd16545">
    <property type="entry name" value="RING-HC_RNF141"/>
    <property type="match status" value="1"/>
</dbReference>
<dbReference type="Gene3D" id="3.30.40.10">
    <property type="entry name" value="Zinc/RING finger domain, C3HC4 (zinc finger)"/>
    <property type="match status" value="1"/>
</dbReference>
<dbReference type="InterPro" id="IPR043400">
    <property type="entry name" value="RING-HC_RNF141"/>
</dbReference>
<dbReference type="InterPro" id="IPR047126">
    <property type="entry name" value="RNF141-like"/>
</dbReference>
<dbReference type="InterPro" id="IPR001841">
    <property type="entry name" value="Znf_RING"/>
</dbReference>
<dbReference type="InterPro" id="IPR013083">
    <property type="entry name" value="Znf_RING/FYVE/PHD"/>
</dbReference>
<dbReference type="InterPro" id="IPR017907">
    <property type="entry name" value="Znf_RING_CS"/>
</dbReference>
<dbReference type="PANTHER" id="PTHR12109:SF3">
    <property type="entry name" value="RING FINGER PROTEIN 141"/>
    <property type="match status" value="1"/>
</dbReference>
<dbReference type="PANTHER" id="PTHR12109">
    <property type="entry name" value="RING FINGER PROTEIN 141-RELATED"/>
    <property type="match status" value="1"/>
</dbReference>
<dbReference type="Pfam" id="PF13920">
    <property type="entry name" value="zf-C3HC4_3"/>
    <property type="match status" value="1"/>
</dbReference>
<dbReference type="SMART" id="SM00184">
    <property type="entry name" value="RING"/>
    <property type="match status" value="1"/>
</dbReference>
<dbReference type="SUPFAM" id="SSF57850">
    <property type="entry name" value="RING/U-box"/>
    <property type="match status" value="1"/>
</dbReference>
<dbReference type="PROSITE" id="PS00518">
    <property type="entry name" value="ZF_RING_1"/>
    <property type="match status" value="1"/>
</dbReference>
<dbReference type="PROSITE" id="PS50089">
    <property type="entry name" value="ZF_RING_2"/>
    <property type="match status" value="1"/>
</dbReference>
<keyword id="KW-0479">Metal-binding</keyword>
<keyword id="KW-1185">Reference proteome</keyword>
<keyword id="KW-0862">Zinc</keyword>
<keyword id="KW-0863">Zinc-finger</keyword>
<sequence>MGQQLSGQAVTRLPEKLIKHVGLVRDSGYLTYDEFLGRVAELNDVTAKLASGQKKHLLFEVQPGSDSSALWKVAVRIVCTKINKEDGMVEASRIMNLYQFIQLYKDITSQAAEVFSSNVAAEGSSEDTCQASMWMGRVKQLTDEEECCICMDGKADLILPCAHSFCQKCIDKWSGQSRNCPVCRIQVTAANESWVMSDAPTGEDVAGYILNLADEAGHPHRP</sequence>